<comment type="function">
    <text evidence="1">Catalyzes the sequential NAD-dependent oxidations of L-histidinol to L-histidinaldehyde and then to L-histidine.</text>
</comment>
<comment type="catalytic activity">
    <reaction evidence="1">
        <text>L-histidinol + 2 NAD(+) + H2O = L-histidine + 2 NADH + 3 H(+)</text>
        <dbReference type="Rhea" id="RHEA:20641"/>
        <dbReference type="ChEBI" id="CHEBI:15377"/>
        <dbReference type="ChEBI" id="CHEBI:15378"/>
        <dbReference type="ChEBI" id="CHEBI:57540"/>
        <dbReference type="ChEBI" id="CHEBI:57595"/>
        <dbReference type="ChEBI" id="CHEBI:57699"/>
        <dbReference type="ChEBI" id="CHEBI:57945"/>
        <dbReference type="EC" id="1.1.1.23"/>
    </reaction>
</comment>
<comment type="cofactor">
    <cofactor evidence="1">
        <name>Zn(2+)</name>
        <dbReference type="ChEBI" id="CHEBI:29105"/>
    </cofactor>
    <text evidence="1">Binds 1 zinc ion per subunit.</text>
</comment>
<comment type="pathway">
    <text evidence="1">Amino-acid biosynthesis; L-histidine biosynthesis; L-histidine from 5-phospho-alpha-D-ribose 1-diphosphate: step 9/9.</text>
</comment>
<comment type="similarity">
    <text evidence="1">Belongs to the histidinol dehydrogenase family.</text>
</comment>
<gene>
    <name evidence="1" type="primary">hisD</name>
    <name type="ordered locus">HH_1721</name>
</gene>
<organism>
    <name type="scientific">Helicobacter hepaticus (strain ATCC 51449 / 3B1)</name>
    <dbReference type="NCBI Taxonomy" id="235279"/>
    <lineage>
        <taxon>Bacteria</taxon>
        <taxon>Pseudomonadati</taxon>
        <taxon>Campylobacterota</taxon>
        <taxon>Epsilonproteobacteria</taxon>
        <taxon>Campylobacterales</taxon>
        <taxon>Helicobacteraceae</taxon>
        <taxon>Helicobacter</taxon>
    </lineage>
</organism>
<sequence>MKYLDVRLPEFANEFQQVLSRGKMDMKEVSSLVQELLDEIRTEGLDALKKHIARFDKWEVKSFEDLRISPKECLNAYNQLSSELKSALHLAYDRIYAFHRKQKMQSWIDCEENGNILGSKFTPMERAGLYIPGGKAAYPSSLLMNAIPAIVAGVKEIVVCSPTPHNQANPLVLAALHLCGITEVYKVGGASAIGLMAYGCKEIPKVDVITGPGNIFVACAKKLVFGEVNIDMVAGPSEIAIIADSQANPLYIAYDLLSQAEHDEMASSILISDSAPLIESVQKHIEQILPSMPRAEIAGASIKNRAVMIYTRNLQESIEIANAIAPEHLEVLTTTPFDTLPYIKHAGAIFLGEHSSEPIGDYLAGPNHTLPTGGSARFFSPLGVEHFMKKSSIIAFSATALEEVGESCALLAQSESLSAHAQAVLTRLDSIKSKRE</sequence>
<proteinExistence type="inferred from homology"/>
<feature type="chain" id="PRO_0000135779" description="Histidinol dehydrogenase">
    <location>
        <begin position="1"/>
        <end position="436"/>
    </location>
</feature>
<feature type="active site" description="Proton acceptor" evidence="1">
    <location>
        <position position="327"/>
    </location>
</feature>
<feature type="active site" description="Proton acceptor" evidence="1">
    <location>
        <position position="328"/>
    </location>
</feature>
<feature type="binding site" evidence="1">
    <location>
        <position position="237"/>
    </location>
    <ligand>
        <name>substrate</name>
    </ligand>
</feature>
<feature type="binding site" evidence="1">
    <location>
        <position position="259"/>
    </location>
    <ligand>
        <name>substrate</name>
    </ligand>
</feature>
<feature type="binding site" evidence="1">
    <location>
        <position position="259"/>
    </location>
    <ligand>
        <name>Zn(2+)</name>
        <dbReference type="ChEBI" id="CHEBI:29105"/>
    </ligand>
</feature>
<feature type="binding site" evidence="1">
    <location>
        <position position="262"/>
    </location>
    <ligand>
        <name>substrate</name>
    </ligand>
</feature>
<feature type="binding site" evidence="1">
    <location>
        <position position="262"/>
    </location>
    <ligand>
        <name>Zn(2+)</name>
        <dbReference type="ChEBI" id="CHEBI:29105"/>
    </ligand>
</feature>
<feature type="binding site" evidence="1">
    <location>
        <position position="328"/>
    </location>
    <ligand>
        <name>substrate</name>
    </ligand>
</feature>
<feature type="binding site" evidence="1">
    <location>
        <position position="361"/>
    </location>
    <ligand>
        <name>substrate</name>
    </ligand>
</feature>
<feature type="binding site" evidence="1">
    <location>
        <position position="361"/>
    </location>
    <ligand>
        <name>Zn(2+)</name>
        <dbReference type="ChEBI" id="CHEBI:29105"/>
    </ligand>
</feature>
<feature type="binding site" evidence="1">
    <location>
        <position position="415"/>
    </location>
    <ligand>
        <name>substrate</name>
    </ligand>
</feature>
<feature type="binding site" evidence="1">
    <location>
        <position position="420"/>
    </location>
    <ligand>
        <name>substrate</name>
    </ligand>
</feature>
<feature type="binding site" evidence="1">
    <location>
        <position position="420"/>
    </location>
    <ligand>
        <name>Zn(2+)</name>
        <dbReference type="ChEBI" id="CHEBI:29105"/>
    </ligand>
</feature>
<evidence type="ECO:0000255" key="1">
    <source>
        <dbReference type="HAMAP-Rule" id="MF_01024"/>
    </source>
</evidence>
<reference key="1">
    <citation type="journal article" date="2003" name="Proc. Natl. Acad. Sci. U.S.A.">
        <title>The complete genome sequence of the carcinogenic bacterium Helicobacter hepaticus.</title>
        <authorList>
            <person name="Suerbaum S."/>
            <person name="Josenhans C."/>
            <person name="Sterzenbach T."/>
            <person name="Drescher B."/>
            <person name="Brandt P."/>
            <person name="Bell M."/>
            <person name="Droege M."/>
            <person name="Fartmann B."/>
            <person name="Fischer H.-P."/>
            <person name="Ge Z."/>
            <person name="Hoerster A."/>
            <person name="Holland R."/>
            <person name="Klein K."/>
            <person name="Koenig J."/>
            <person name="Macko L."/>
            <person name="Mendz G.L."/>
            <person name="Nyakatura G."/>
            <person name="Schauer D.B."/>
            <person name="Shen Z."/>
            <person name="Weber J."/>
            <person name="Frosch M."/>
            <person name="Fox J.G."/>
        </authorList>
    </citation>
    <scope>NUCLEOTIDE SEQUENCE [LARGE SCALE GENOMIC DNA]</scope>
    <source>
        <strain>ATCC 51449 / 3B1</strain>
    </source>
</reference>
<accession>Q7VFF5</accession>
<keyword id="KW-0028">Amino-acid biosynthesis</keyword>
<keyword id="KW-0368">Histidine biosynthesis</keyword>
<keyword id="KW-0479">Metal-binding</keyword>
<keyword id="KW-0520">NAD</keyword>
<keyword id="KW-0560">Oxidoreductase</keyword>
<keyword id="KW-1185">Reference proteome</keyword>
<keyword id="KW-0862">Zinc</keyword>
<name>HISX_HELHP</name>
<dbReference type="EC" id="1.1.1.23" evidence="1"/>
<dbReference type="EMBL" id="AE017125">
    <property type="protein sequence ID" value="AAP78318.1"/>
    <property type="molecule type" value="Genomic_DNA"/>
</dbReference>
<dbReference type="RefSeq" id="WP_011116560.1">
    <property type="nucleotide sequence ID" value="NC_004917.1"/>
</dbReference>
<dbReference type="SMR" id="Q7VFF5"/>
<dbReference type="STRING" id="235279.HH_1721"/>
<dbReference type="KEGG" id="hhe:HH_1721"/>
<dbReference type="eggNOG" id="COG0141">
    <property type="taxonomic scope" value="Bacteria"/>
</dbReference>
<dbReference type="HOGENOM" id="CLU_006732_3_3_7"/>
<dbReference type="OrthoDB" id="9805269at2"/>
<dbReference type="UniPathway" id="UPA00031">
    <property type="reaction ID" value="UER00014"/>
</dbReference>
<dbReference type="Proteomes" id="UP000002495">
    <property type="component" value="Chromosome"/>
</dbReference>
<dbReference type="GO" id="GO:0005829">
    <property type="term" value="C:cytosol"/>
    <property type="evidence" value="ECO:0007669"/>
    <property type="project" value="TreeGrafter"/>
</dbReference>
<dbReference type="GO" id="GO:0004399">
    <property type="term" value="F:histidinol dehydrogenase activity"/>
    <property type="evidence" value="ECO:0007669"/>
    <property type="project" value="UniProtKB-UniRule"/>
</dbReference>
<dbReference type="GO" id="GO:0051287">
    <property type="term" value="F:NAD binding"/>
    <property type="evidence" value="ECO:0007669"/>
    <property type="project" value="InterPro"/>
</dbReference>
<dbReference type="GO" id="GO:0008270">
    <property type="term" value="F:zinc ion binding"/>
    <property type="evidence" value="ECO:0007669"/>
    <property type="project" value="UniProtKB-UniRule"/>
</dbReference>
<dbReference type="GO" id="GO:0000105">
    <property type="term" value="P:L-histidine biosynthetic process"/>
    <property type="evidence" value="ECO:0007669"/>
    <property type="project" value="UniProtKB-UniRule"/>
</dbReference>
<dbReference type="CDD" id="cd06572">
    <property type="entry name" value="Histidinol_dh"/>
    <property type="match status" value="1"/>
</dbReference>
<dbReference type="FunFam" id="3.40.50.1980:FF:000001">
    <property type="entry name" value="Histidinol dehydrogenase"/>
    <property type="match status" value="1"/>
</dbReference>
<dbReference type="FunFam" id="3.40.50.1980:FF:000026">
    <property type="entry name" value="Histidinol dehydrogenase"/>
    <property type="match status" value="1"/>
</dbReference>
<dbReference type="Gene3D" id="1.20.5.1300">
    <property type="match status" value="1"/>
</dbReference>
<dbReference type="Gene3D" id="3.40.50.1980">
    <property type="entry name" value="Nitrogenase molybdenum iron protein domain"/>
    <property type="match status" value="2"/>
</dbReference>
<dbReference type="HAMAP" id="MF_01024">
    <property type="entry name" value="HisD"/>
    <property type="match status" value="1"/>
</dbReference>
<dbReference type="InterPro" id="IPR016161">
    <property type="entry name" value="Ald_DH/histidinol_DH"/>
</dbReference>
<dbReference type="InterPro" id="IPR001692">
    <property type="entry name" value="Histidinol_DH_CS"/>
</dbReference>
<dbReference type="InterPro" id="IPR022695">
    <property type="entry name" value="Histidinol_DH_monofunct"/>
</dbReference>
<dbReference type="InterPro" id="IPR012131">
    <property type="entry name" value="Hstdl_DH"/>
</dbReference>
<dbReference type="NCBIfam" id="TIGR00069">
    <property type="entry name" value="hisD"/>
    <property type="match status" value="1"/>
</dbReference>
<dbReference type="PANTHER" id="PTHR21256:SF2">
    <property type="entry name" value="HISTIDINE BIOSYNTHESIS TRIFUNCTIONAL PROTEIN"/>
    <property type="match status" value="1"/>
</dbReference>
<dbReference type="PANTHER" id="PTHR21256">
    <property type="entry name" value="HISTIDINOL DEHYDROGENASE HDH"/>
    <property type="match status" value="1"/>
</dbReference>
<dbReference type="Pfam" id="PF00815">
    <property type="entry name" value="Histidinol_dh"/>
    <property type="match status" value="1"/>
</dbReference>
<dbReference type="PIRSF" id="PIRSF000099">
    <property type="entry name" value="Histidinol_dh"/>
    <property type="match status" value="1"/>
</dbReference>
<dbReference type="PRINTS" id="PR00083">
    <property type="entry name" value="HOLDHDRGNASE"/>
</dbReference>
<dbReference type="SUPFAM" id="SSF53720">
    <property type="entry name" value="ALDH-like"/>
    <property type="match status" value="1"/>
</dbReference>
<dbReference type="PROSITE" id="PS00611">
    <property type="entry name" value="HISOL_DEHYDROGENASE"/>
    <property type="match status" value="1"/>
</dbReference>
<protein>
    <recommendedName>
        <fullName evidence="1">Histidinol dehydrogenase</fullName>
        <shortName evidence="1">HDH</shortName>
        <ecNumber evidence="1">1.1.1.23</ecNumber>
    </recommendedName>
</protein>